<dbReference type="EC" id="2.8.1.-" evidence="1"/>
<dbReference type="EMBL" id="CP000868">
    <property type="protein sequence ID" value="ABX16659.1"/>
    <property type="molecule type" value="Genomic_DNA"/>
</dbReference>
<dbReference type="EMBL" id="AP009385">
    <property type="protein sequence ID" value="BAG42233.1"/>
    <property type="molecule type" value="Genomic_DNA"/>
</dbReference>
<dbReference type="RefSeq" id="WP_012214279.1">
    <property type="nucleotide sequence ID" value="NC_010084.1"/>
</dbReference>
<dbReference type="SMR" id="A9AKB0"/>
<dbReference type="STRING" id="395019.BMULJ_00258"/>
<dbReference type="KEGG" id="bmj:BMULJ_00258"/>
<dbReference type="KEGG" id="bmu:Bmul_2975"/>
<dbReference type="eggNOG" id="COG0037">
    <property type="taxonomic scope" value="Bacteria"/>
</dbReference>
<dbReference type="HOGENOM" id="CLU_026481_0_0_4"/>
<dbReference type="Proteomes" id="UP000008815">
    <property type="component" value="Chromosome 1"/>
</dbReference>
<dbReference type="GO" id="GO:0005737">
    <property type="term" value="C:cytoplasm"/>
    <property type="evidence" value="ECO:0007669"/>
    <property type="project" value="UniProtKB-SubCell"/>
</dbReference>
<dbReference type="GO" id="GO:0051539">
    <property type="term" value="F:4 iron, 4 sulfur cluster binding"/>
    <property type="evidence" value="ECO:0007669"/>
    <property type="project" value="UniProtKB-UniRule"/>
</dbReference>
<dbReference type="GO" id="GO:0005524">
    <property type="term" value="F:ATP binding"/>
    <property type="evidence" value="ECO:0007669"/>
    <property type="project" value="UniProtKB-UniRule"/>
</dbReference>
<dbReference type="GO" id="GO:0000287">
    <property type="term" value="F:magnesium ion binding"/>
    <property type="evidence" value="ECO:0007669"/>
    <property type="project" value="UniProtKB-UniRule"/>
</dbReference>
<dbReference type="GO" id="GO:0016783">
    <property type="term" value="F:sulfurtransferase activity"/>
    <property type="evidence" value="ECO:0007669"/>
    <property type="project" value="UniProtKB-UniRule"/>
</dbReference>
<dbReference type="GO" id="GO:0000049">
    <property type="term" value="F:tRNA binding"/>
    <property type="evidence" value="ECO:0007669"/>
    <property type="project" value="UniProtKB-KW"/>
</dbReference>
<dbReference type="GO" id="GO:0034227">
    <property type="term" value="P:tRNA thio-modification"/>
    <property type="evidence" value="ECO:0007669"/>
    <property type="project" value="UniProtKB-UniRule"/>
</dbReference>
<dbReference type="CDD" id="cd24138">
    <property type="entry name" value="TtcA-like"/>
    <property type="match status" value="1"/>
</dbReference>
<dbReference type="Gene3D" id="3.40.50.620">
    <property type="entry name" value="HUPs"/>
    <property type="match status" value="1"/>
</dbReference>
<dbReference type="HAMAP" id="MF_01850">
    <property type="entry name" value="TtcA"/>
    <property type="match status" value="1"/>
</dbReference>
<dbReference type="InterPro" id="IPR014729">
    <property type="entry name" value="Rossmann-like_a/b/a_fold"/>
</dbReference>
<dbReference type="InterPro" id="IPR011063">
    <property type="entry name" value="TilS/TtcA_N"/>
</dbReference>
<dbReference type="InterPro" id="IPR012089">
    <property type="entry name" value="tRNA_Cyd_32_2_STrfase"/>
</dbReference>
<dbReference type="NCBIfam" id="NF007972">
    <property type="entry name" value="PRK10696.1"/>
    <property type="match status" value="1"/>
</dbReference>
<dbReference type="PANTHER" id="PTHR43686:SF1">
    <property type="entry name" value="AMINOTRAN_5 DOMAIN-CONTAINING PROTEIN"/>
    <property type="match status" value="1"/>
</dbReference>
<dbReference type="PANTHER" id="PTHR43686">
    <property type="entry name" value="SULFURTRANSFERASE-RELATED"/>
    <property type="match status" value="1"/>
</dbReference>
<dbReference type="Pfam" id="PF01171">
    <property type="entry name" value="ATP_bind_3"/>
    <property type="match status" value="1"/>
</dbReference>
<dbReference type="SUPFAM" id="SSF52402">
    <property type="entry name" value="Adenine nucleotide alpha hydrolases-like"/>
    <property type="match status" value="1"/>
</dbReference>
<evidence type="ECO:0000255" key="1">
    <source>
        <dbReference type="HAMAP-Rule" id="MF_01850"/>
    </source>
</evidence>
<comment type="function">
    <text evidence="1">Catalyzes the ATP-dependent 2-thiolation of cytidine in position 32 of tRNA, to form 2-thiocytidine (s(2)C32). The sulfur atoms are provided by the cysteine/cysteine desulfurase (IscS) system.</text>
</comment>
<comment type="catalytic activity">
    <reaction evidence="1">
        <text>cytidine(32) in tRNA + S-sulfanyl-L-cysteinyl-[cysteine desulfurase] + AH2 + ATP = 2-thiocytidine(32) in tRNA + L-cysteinyl-[cysteine desulfurase] + A + AMP + diphosphate + H(+)</text>
        <dbReference type="Rhea" id="RHEA:57048"/>
        <dbReference type="Rhea" id="RHEA-COMP:10288"/>
        <dbReference type="Rhea" id="RHEA-COMP:12157"/>
        <dbReference type="Rhea" id="RHEA-COMP:12158"/>
        <dbReference type="Rhea" id="RHEA-COMP:14821"/>
        <dbReference type="ChEBI" id="CHEBI:13193"/>
        <dbReference type="ChEBI" id="CHEBI:15378"/>
        <dbReference type="ChEBI" id="CHEBI:17499"/>
        <dbReference type="ChEBI" id="CHEBI:29950"/>
        <dbReference type="ChEBI" id="CHEBI:30616"/>
        <dbReference type="ChEBI" id="CHEBI:33019"/>
        <dbReference type="ChEBI" id="CHEBI:61963"/>
        <dbReference type="ChEBI" id="CHEBI:82748"/>
        <dbReference type="ChEBI" id="CHEBI:141453"/>
        <dbReference type="ChEBI" id="CHEBI:456215"/>
    </reaction>
    <physiologicalReaction direction="left-to-right" evidence="1">
        <dbReference type="Rhea" id="RHEA:57049"/>
    </physiologicalReaction>
</comment>
<comment type="cofactor">
    <cofactor evidence="1">
        <name>Mg(2+)</name>
        <dbReference type="ChEBI" id="CHEBI:18420"/>
    </cofactor>
</comment>
<comment type="cofactor">
    <cofactor evidence="1">
        <name>[4Fe-4S] cluster</name>
        <dbReference type="ChEBI" id="CHEBI:49883"/>
    </cofactor>
    <text evidence="1">Binds 1 [4Fe-4S] cluster per subunit. The cluster is chelated by three Cys residues, the fourth Fe has a free coordination site that may bind a sulfur atom transferred from the persulfide of IscS.</text>
</comment>
<comment type="pathway">
    <text evidence="1">tRNA modification.</text>
</comment>
<comment type="subunit">
    <text evidence="1">Homodimer.</text>
</comment>
<comment type="subcellular location">
    <subcellularLocation>
        <location evidence="1">Cytoplasm</location>
    </subcellularLocation>
</comment>
<comment type="miscellaneous">
    <text evidence="1">The thiolation reaction likely consists of two steps: a first activation step by ATP to form an adenylated intermediate of the target base of tRNA, and a second nucleophilic substitution step of the sulfur (S) atom supplied by the hydrosulfide attached to the Fe-S cluster.</text>
</comment>
<comment type="similarity">
    <text evidence="1">Belongs to the TtcA family.</text>
</comment>
<proteinExistence type="inferred from homology"/>
<accession>A9AKB0</accession>
<name>TTCA_BURM1</name>
<reference key="1">
    <citation type="submission" date="2007-10" db="EMBL/GenBank/DDBJ databases">
        <title>Complete sequence of chromosome 1 of Burkholderia multivorans ATCC 17616.</title>
        <authorList>
            <person name="Copeland A."/>
            <person name="Lucas S."/>
            <person name="Lapidus A."/>
            <person name="Barry K."/>
            <person name="Glavina del Rio T."/>
            <person name="Dalin E."/>
            <person name="Tice H."/>
            <person name="Pitluck S."/>
            <person name="Chain P."/>
            <person name="Malfatti S."/>
            <person name="Shin M."/>
            <person name="Vergez L."/>
            <person name="Schmutz J."/>
            <person name="Larimer F."/>
            <person name="Land M."/>
            <person name="Hauser L."/>
            <person name="Kyrpides N."/>
            <person name="Kim E."/>
            <person name="Tiedje J."/>
            <person name="Richardson P."/>
        </authorList>
    </citation>
    <scope>NUCLEOTIDE SEQUENCE [LARGE SCALE GENOMIC DNA]</scope>
    <source>
        <strain>ATCC 17616 / 249</strain>
    </source>
</reference>
<reference key="2">
    <citation type="submission" date="2007-04" db="EMBL/GenBank/DDBJ databases">
        <title>Complete genome sequence of Burkholderia multivorans ATCC 17616.</title>
        <authorList>
            <person name="Ohtsubo Y."/>
            <person name="Yamashita A."/>
            <person name="Kurokawa K."/>
            <person name="Takami H."/>
            <person name="Yuhara S."/>
            <person name="Nishiyama E."/>
            <person name="Endo R."/>
            <person name="Miyazaki R."/>
            <person name="Ono A."/>
            <person name="Yano K."/>
            <person name="Ito M."/>
            <person name="Sota M."/>
            <person name="Yuji N."/>
            <person name="Hattori M."/>
            <person name="Tsuda M."/>
        </authorList>
    </citation>
    <scope>NUCLEOTIDE SEQUENCE [LARGE SCALE GENOMIC DNA]</scope>
    <source>
        <strain>ATCC 17616 / 249</strain>
    </source>
</reference>
<organism>
    <name type="scientific">Burkholderia multivorans (strain ATCC 17616 / 249)</name>
    <dbReference type="NCBI Taxonomy" id="395019"/>
    <lineage>
        <taxon>Bacteria</taxon>
        <taxon>Pseudomonadati</taxon>
        <taxon>Pseudomonadota</taxon>
        <taxon>Betaproteobacteria</taxon>
        <taxon>Burkholderiales</taxon>
        <taxon>Burkholderiaceae</taxon>
        <taxon>Burkholderia</taxon>
        <taxon>Burkholderia cepacia complex</taxon>
    </lineage>
</organism>
<keyword id="KW-0004">4Fe-4S</keyword>
<keyword id="KW-0067">ATP-binding</keyword>
<keyword id="KW-0963">Cytoplasm</keyword>
<keyword id="KW-0408">Iron</keyword>
<keyword id="KW-0411">Iron-sulfur</keyword>
<keyword id="KW-0460">Magnesium</keyword>
<keyword id="KW-0479">Metal-binding</keyword>
<keyword id="KW-0547">Nucleotide-binding</keyword>
<keyword id="KW-1185">Reference proteome</keyword>
<keyword id="KW-0694">RNA-binding</keyword>
<keyword id="KW-0808">Transferase</keyword>
<keyword id="KW-0819">tRNA processing</keyword>
<keyword id="KW-0820">tRNA-binding</keyword>
<feature type="chain" id="PRO_0000348688" description="tRNA-cytidine(32) 2-sulfurtransferase">
    <location>
        <begin position="1"/>
        <end position="331"/>
    </location>
</feature>
<feature type="short sequence motif" description="PP-loop motif" evidence="1">
    <location>
        <begin position="71"/>
        <end position="76"/>
    </location>
</feature>
<feature type="binding site" evidence="1">
    <location>
        <position position="146"/>
    </location>
    <ligand>
        <name>[4Fe-4S] cluster</name>
        <dbReference type="ChEBI" id="CHEBI:49883"/>
    </ligand>
</feature>
<feature type="binding site" evidence="1">
    <location>
        <position position="149"/>
    </location>
    <ligand>
        <name>[4Fe-4S] cluster</name>
        <dbReference type="ChEBI" id="CHEBI:49883"/>
    </ligand>
</feature>
<feature type="binding site" evidence="1">
    <location>
        <position position="237"/>
    </location>
    <ligand>
        <name>[4Fe-4S] cluster</name>
        <dbReference type="ChEBI" id="CHEBI:49883"/>
    </ligand>
</feature>
<protein>
    <recommendedName>
        <fullName evidence="1">tRNA-cytidine(32) 2-sulfurtransferase</fullName>
        <ecNumber evidence="1">2.8.1.-</ecNumber>
    </recommendedName>
    <alternativeName>
        <fullName evidence="1">Two-thiocytidine biosynthesis protein A</fullName>
    </alternativeName>
    <alternativeName>
        <fullName evidence="1">tRNA 2-thiocytidine biosynthesis protein TtcA</fullName>
    </alternativeName>
</protein>
<sequence>MNAPQTNDTAADVATIEASAAEVGRRALTRREQKEAYEDNKLFKRIVRQVGQAIGDYNMIEDGDKVMVCLSGGKDSYAMLDILLRLRERAPIDFDIVAVNLDQKQPGFPEHVLPEYLTQIGVPFHIENQDTYSIVKRLVPEGKTTCSLCSRLRRGILYRVAGELGATKIALGHHRDDIVQTLLLNMFYGGKLKGMPPKLQSDDGKNVVIRPLAYVKETDLEKYAELREFPIIPCNLCGSQPNLKRAEMKALIREWDKRFPGRVDNMFNALANVVPSHLMDTTLFPFASLRATGQADPQGDIAFDEEPCASGDETAAPGGAKPISIVQFDDL</sequence>
<gene>
    <name evidence="1" type="primary">ttcA</name>
    <name type="ordered locus">Bmul_2975</name>
    <name type="ordered locus">BMULJ_00258</name>
</gene>